<name>PAGP_CROTZ</name>
<dbReference type="EC" id="2.3.1.251" evidence="1"/>
<dbReference type="EMBL" id="FN543093">
    <property type="protein sequence ID" value="CBA29120.1"/>
    <property type="molecule type" value="Genomic_DNA"/>
</dbReference>
<dbReference type="SMR" id="C9XYQ1"/>
<dbReference type="KEGG" id="ctu:CTU_12560"/>
<dbReference type="PATRIC" id="fig|693216.3.peg.1194"/>
<dbReference type="HOGENOM" id="CLU_104099_0_0_6"/>
<dbReference type="Proteomes" id="UP000002069">
    <property type="component" value="Chromosome"/>
</dbReference>
<dbReference type="GO" id="GO:0009279">
    <property type="term" value="C:cell outer membrane"/>
    <property type="evidence" value="ECO:0007669"/>
    <property type="project" value="UniProtKB-SubCell"/>
</dbReference>
<dbReference type="GO" id="GO:0016746">
    <property type="term" value="F:acyltransferase activity"/>
    <property type="evidence" value="ECO:0007669"/>
    <property type="project" value="UniProtKB-UniRule"/>
</dbReference>
<dbReference type="GO" id="GO:0009245">
    <property type="term" value="P:lipid A biosynthetic process"/>
    <property type="evidence" value="ECO:0007669"/>
    <property type="project" value="UniProtKB-UniRule"/>
</dbReference>
<dbReference type="FunFam" id="2.40.160.20:FF:000002">
    <property type="entry name" value="Lipid A palmitoyltransferase PagP"/>
    <property type="match status" value="1"/>
</dbReference>
<dbReference type="Gene3D" id="2.40.160.20">
    <property type="match status" value="1"/>
</dbReference>
<dbReference type="HAMAP" id="MF_00837">
    <property type="entry name" value="PagP_transferase"/>
    <property type="match status" value="1"/>
</dbReference>
<dbReference type="InterPro" id="IPR009746">
    <property type="entry name" value="LipidA_acyl_PagP"/>
</dbReference>
<dbReference type="InterPro" id="IPR011250">
    <property type="entry name" value="OMP/PagP_b-brl"/>
</dbReference>
<dbReference type="NCBIfam" id="NF008271">
    <property type="entry name" value="PRK11045.1"/>
    <property type="match status" value="1"/>
</dbReference>
<dbReference type="Pfam" id="PF07017">
    <property type="entry name" value="PagP"/>
    <property type="match status" value="1"/>
</dbReference>
<dbReference type="SUPFAM" id="SSF56925">
    <property type="entry name" value="OMPA-like"/>
    <property type="match status" value="1"/>
</dbReference>
<sequence length="192" mass="22053">MTVVNKSFLTFLVFFCQILFPLNASALEAPRTVKAWASVLGDNIAETWNEPQHVDLYVPAITWHARFAYDKEKTDRYNERPWGAGIGKSRWDEKGNWHGLYVMAFKDSYNKWEPIAGYGWEATWRPLPDDAFHVGLGYTLGVTARDNWDYIPIPLVLPLASVGYGPATFQMTYIPGTYNNGNVYFAWLRLQF</sequence>
<feature type="signal peptide" evidence="1">
    <location>
        <begin position="1"/>
        <end position="26"/>
    </location>
</feature>
<feature type="chain" id="PRO_0000414432" description="Lipid A acyltransferase PagP">
    <location>
        <begin position="27"/>
        <end position="192"/>
    </location>
</feature>
<feature type="active site" evidence="1">
    <location>
        <position position="64"/>
    </location>
</feature>
<feature type="active site" evidence="1">
    <location>
        <position position="107"/>
    </location>
</feature>
<feature type="active site" evidence="1">
    <location>
        <position position="108"/>
    </location>
</feature>
<feature type="site" description="Role in lipopolysaccharide recognition" evidence="1">
    <location>
        <position position="73"/>
    </location>
</feature>
<feature type="site" description="Role in the phospholipid gating" evidence="1">
    <location>
        <position position="178"/>
    </location>
</feature>
<gene>
    <name evidence="1" type="primary">pagP</name>
    <name type="synonym">crcA</name>
    <name type="ordered locus">Ctu_12560</name>
</gene>
<comment type="function">
    <text evidence="1">Transfers a fatty acid residue from the sn-1 position of a phospholipid to the N-linked hydroxyfatty acid chain on the proximal unit of lipid A or its precursors.</text>
</comment>
<comment type="catalytic activity">
    <reaction evidence="1">
        <text>a lipid A + a 1,2-diacyl-sn-glycero-3-phosphocholine = a hepta-acyl lipid A + a 2-acyl-sn-glycero-3-phosphocholine</text>
        <dbReference type="Rhea" id="RHEA:74275"/>
        <dbReference type="ChEBI" id="CHEBI:57643"/>
        <dbReference type="ChEBI" id="CHEBI:57875"/>
        <dbReference type="ChEBI" id="CHEBI:193141"/>
        <dbReference type="ChEBI" id="CHEBI:193142"/>
        <dbReference type="EC" id="2.3.1.251"/>
    </reaction>
</comment>
<comment type="catalytic activity">
    <reaction evidence="1">
        <text>a lipid IVA + a 1,2-diacyl-sn-glycero-3-phosphocholine = a lipid IVB + a 2-acyl-sn-glycero-3-phosphocholine</text>
        <dbReference type="Rhea" id="RHEA:74279"/>
        <dbReference type="ChEBI" id="CHEBI:57643"/>
        <dbReference type="ChEBI" id="CHEBI:57875"/>
        <dbReference type="ChEBI" id="CHEBI:176425"/>
        <dbReference type="ChEBI" id="CHEBI:193143"/>
        <dbReference type="EC" id="2.3.1.251"/>
    </reaction>
</comment>
<comment type="catalytic activity">
    <reaction evidence="1">
        <text>a lipid IIA + a 1,2-diacyl-sn-glycero-3-phosphocholine = a lipid IIB + a 2-acyl-sn-glycero-3-phosphocholine</text>
        <dbReference type="Rhea" id="RHEA:74283"/>
        <dbReference type="ChEBI" id="CHEBI:57643"/>
        <dbReference type="ChEBI" id="CHEBI:57875"/>
        <dbReference type="ChEBI" id="CHEBI:193144"/>
        <dbReference type="ChEBI" id="CHEBI:193145"/>
        <dbReference type="EC" id="2.3.1.251"/>
    </reaction>
</comment>
<comment type="subunit">
    <text evidence="1">Homodimer.</text>
</comment>
<comment type="subcellular location">
    <subcellularLocation>
        <location evidence="1">Cell outer membrane</location>
    </subcellularLocation>
</comment>
<comment type="similarity">
    <text evidence="1">Belongs to the lipid A palmitoyltransferase family.</text>
</comment>
<protein>
    <recommendedName>
        <fullName evidence="1">Lipid A acyltransferase PagP</fullName>
        <ecNumber evidence="1">2.3.1.251</ecNumber>
    </recommendedName>
    <alternativeName>
        <fullName evidence="1">Lipid A acylation protein</fullName>
    </alternativeName>
</protein>
<organism>
    <name type="scientific">Cronobacter turicensis (strain DSM 18703 / CCUG 55852 / LMG 23827 / z3032)</name>
    <dbReference type="NCBI Taxonomy" id="693216"/>
    <lineage>
        <taxon>Bacteria</taxon>
        <taxon>Pseudomonadati</taxon>
        <taxon>Pseudomonadota</taxon>
        <taxon>Gammaproteobacteria</taxon>
        <taxon>Enterobacterales</taxon>
        <taxon>Enterobacteriaceae</taxon>
        <taxon>Cronobacter</taxon>
    </lineage>
</organism>
<accession>C9XYQ1</accession>
<proteinExistence type="inferred from homology"/>
<keyword id="KW-0012">Acyltransferase</keyword>
<keyword id="KW-0998">Cell outer membrane</keyword>
<keyword id="KW-0472">Membrane</keyword>
<keyword id="KW-0732">Signal</keyword>
<keyword id="KW-0808">Transferase</keyword>
<evidence type="ECO:0000255" key="1">
    <source>
        <dbReference type="HAMAP-Rule" id="MF_00837"/>
    </source>
</evidence>
<reference key="1">
    <citation type="journal article" date="2011" name="J. Bacteriol.">
        <title>Complete genome sequence of Cronobacter turicensis LMG 23827, a food-borne pathogen causing deaths in neonates.</title>
        <authorList>
            <person name="Stephan R."/>
            <person name="Lehner A."/>
            <person name="Tischler P."/>
            <person name="Rattei T."/>
        </authorList>
    </citation>
    <scope>NUCLEOTIDE SEQUENCE [LARGE SCALE GENOMIC DNA]</scope>
    <source>
        <strain>DSM 18703 / CCUG 55852 / LMG 23827 / z3032</strain>
    </source>
</reference>